<sequence>MAEFKEQVLDILEEVCENDIVKENLDVQLFEEGILDSFAVVSLLVEFQERLDIEVSISDFDRDEWATPNMVIKKLEEIR</sequence>
<protein>
    <recommendedName>
        <fullName evidence="1">D-alanyl carrier protein</fullName>
        <shortName evidence="1">DCP</shortName>
    </recommendedName>
    <alternativeName>
        <fullName evidence="1">D-alanine--poly(phosphoribitol) ligase subunit 2</fullName>
    </alternativeName>
</protein>
<name>DLTC_BACCZ</name>
<feature type="chain" id="PRO_0000213085" description="D-alanyl carrier protein">
    <location>
        <begin position="1"/>
        <end position="79"/>
    </location>
</feature>
<feature type="domain" description="Carrier" evidence="1">
    <location>
        <begin position="2"/>
        <end position="79"/>
    </location>
</feature>
<feature type="modified residue" description="O-(pantetheine 4'-phosphoryl)serine" evidence="1">
    <location>
        <position position="37"/>
    </location>
</feature>
<accession>Q63E04</accession>
<gene>
    <name evidence="1" type="primary">dltC</name>
    <name type="ordered locus">BCE33L1259</name>
</gene>
<keyword id="KW-0961">Cell wall biogenesis/degradation</keyword>
<keyword id="KW-0963">Cytoplasm</keyword>
<keyword id="KW-0596">Phosphopantetheine</keyword>
<keyword id="KW-0597">Phosphoprotein</keyword>
<reference key="1">
    <citation type="journal article" date="2006" name="J. Bacteriol.">
        <title>Pathogenomic sequence analysis of Bacillus cereus and Bacillus thuringiensis isolates closely related to Bacillus anthracis.</title>
        <authorList>
            <person name="Han C.S."/>
            <person name="Xie G."/>
            <person name="Challacombe J.F."/>
            <person name="Altherr M.R."/>
            <person name="Bhotika S.S."/>
            <person name="Bruce D."/>
            <person name="Campbell C.S."/>
            <person name="Campbell M.L."/>
            <person name="Chen J."/>
            <person name="Chertkov O."/>
            <person name="Cleland C."/>
            <person name="Dimitrijevic M."/>
            <person name="Doggett N.A."/>
            <person name="Fawcett J.J."/>
            <person name="Glavina T."/>
            <person name="Goodwin L.A."/>
            <person name="Hill K.K."/>
            <person name="Hitchcock P."/>
            <person name="Jackson P.J."/>
            <person name="Keim P."/>
            <person name="Kewalramani A.R."/>
            <person name="Longmire J."/>
            <person name="Lucas S."/>
            <person name="Malfatti S."/>
            <person name="McMurry K."/>
            <person name="Meincke L.J."/>
            <person name="Misra M."/>
            <person name="Moseman B.L."/>
            <person name="Mundt M."/>
            <person name="Munk A.C."/>
            <person name="Okinaka R.T."/>
            <person name="Parson-Quintana B."/>
            <person name="Reilly L.P."/>
            <person name="Richardson P."/>
            <person name="Robinson D.L."/>
            <person name="Rubin E."/>
            <person name="Saunders E."/>
            <person name="Tapia R."/>
            <person name="Tesmer J.G."/>
            <person name="Thayer N."/>
            <person name="Thompson L.S."/>
            <person name="Tice H."/>
            <person name="Ticknor L.O."/>
            <person name="Wills P.L."/>
            <person name="Brettin T.S."/>
            <person name="Gilna P."/>
        </authorList>
    </citation>
    <scope>NUCLEOTIDE SEQUENCE [LARGE SCALE GENOMIC DNA]</scope>
    <source>
        <strain>ZK / E33L</strain>
    </source>
</reference>
<proteinExistence type="inferred from homology"/>
<organism>
    <name type="scientific">Bacillus cereus (strain ZK / E33L)</name>
    <dbReference type="NCBI Taxonomy" id="288681"/>
    <lineage>
        <taxon>Bacteria</taxon>
        <taxon>Bacillati</taxon>
        <taxon>Bacillota</taxon>
        <taxon>Bacilli</taxon>
        <taxon>Bacillales</taxon>
        <taxon>Bacillaceae</taxon>
        <taxon>Bacillus</taxon>
        <taxon>Bacillus cereus group</taxon>
    </lineage>
</organism>
<comment type="function">
    <text evidence="1">Carrier protein involved in the D-alanylation of lipoteichoic acid (LTA). The loading of thioester-linked D-alanine onto DltC is catalyzed by D-alanine--D-alanyl carrier protein ligase DltA. The DltC-carried D-alanyl group is further transferred to cell membrane phosphatidylglycerol (PG) by forming an ester bond, probably catalyzed by DltD. D-alanylation of LTA plays an important role in modulating the properties of the cell wall in Gram-positive bacteria, influencing the net charge of the cell wall.</text>
</comment>
<comment type="pathway">
    <text evidence="1">Cell wall biogenesis; lipoteichoic acid biosynthesis.</text>
</comment>
<comment type="subcellular location">
    <subcellularLocation>
        <location evidence="1">Cytoplasm</location>
    </subcellularLocation>
</comment>
<comment type="PTM">
    <text evidence="1">4'-phosphopantetheine is transferred from CoA to a specific serine of apo-DCP.</text>
</comment>
<comment type="similarity">
    <text evidence="1">Belongs to the DltC family.</text>
</comment>
<dbReference type="EMBL" id="CP000001">
    <property type="protein sequence ID" value="AAU18988.1"/>
    <property type="molecule type" value="Genomic_DNA"/>
</dbReference>
<dbReference type="RefSeq" id="WP_000807310.1">
    <property type="nucleotide sequence ID" value="NZ_CP009968.1"/>
</dbReference>
<dbReference type="SMR" id="Q63E04"/>
<dbReference type="GeneID" id="93009671"/>
<dbReference type="KEGG" id="bcz:BCE33L1259"/>
<dbReference type="PATRIC" id="fig|288681.22.peg.4300"/>
<dbReference type="UniPathway" id="UPA00556"/>
<dbReference type="Proteomes" id="UP000002612">
    <property type="component" value="Chromosome"/>
</dbReference>
<dbReference type="GO" id="GO:0005737">
    <property type="term" value="C:cytoplasm"/>
    <property type="evidence" value="ECO:0007669"/>
    <property type="project" value="UniProtKB-SubCell"/>
</dbReference>
<dbReference type="GO" id="GO:0036370">
    <property type="term" value="F:D-alanyl carrier activity"/>
    <property type="evidence" value="ECO:0007669"/>
    <property type="project" value="UniProtKB-UniRule"/>
</dbReference>
<dbReference type="GO" id="GO:0071555">
    <property type="term" value="P:cell wall organization"/>
    <property type="evidence" value="ECO:0007669"/>
    <property type="project" value="UniProtKB-KW"/>
</dbReference>
<dbReference type="GO" id="GO:0070395">
    <property type="term" value="P:lipoteichoic acid biosynthetic process"/>
    <property type="evidence" value="ECO:0007669"/>
    <property type="project" value="UniProtKB-UniRule"/>
</dbReference>
<dbReference type="FunFam" id="1.10.1200.10:FF:000004">
    <property type="entry name" value="D-alanyl carrier protein"/>
    <property type="match status" value="1"/>
</dbReference>
<dbReference type="Gene3D" id="1.10.1200.10">
    <property type="entry name" value="ACP-like"/>
    <property type="match status" value="1"/>
</dbReference>
<dbReference type="HAMAP" id="MF_00565">
    <property type="entry name" value="DltC"/>
    <property type="match status" value="1"/>
</dbReference>
<dbReference type="InterPro" id="IPR036736">
    <property type="entry name" value="ACP-like_sf"/>
</dbReference>
<dbReference type="InterPro" id="IPR003230">
    <property type="entry name" value="DltC"/>
</dbReference>
<dbReference type="InterPro" id="IPR009081">
    <property type="entry name" value="PP-bd_ACP"/>
</dbReference>
<dbReference type="NCBIfam" id="TIGR01688">
    <property type="entry name" value="dltC"/>
    <property type="match status" value="1"/>
</dbReference>
<dbReference type="NCBIfam" id="NF003464">
    <property type="entry name" value="PRK05087.1"/>
    <property type="match status" value="1"/>
</dbReference>
<dbReference type="Pfam" id="PF00550">
    <property type="entry name" value="PP-binding"/>
    <property type="match status" value="1"/>
</dbReference>
<dbReference type="SUPFAM" id="SSF47336">
    <property type="entry name" value="ACP-like"/>
    <property type="match status" value="1"/>
</dbReference>
<dbReference type="PROSITE" id="PS50075">
    <property type="entry name" value="CARRIER"/>
    <property type="match status" value="1"/>
</dbReference>
<evidence type="ECO:0000255" key="1">
    <source>
        <dbReference type="HAMAP-Rule" id="MF_00565"/>
    </source>
</evidence>